<accession>Q5U2Z7</accession>
<accession>Q6I7R2</accession>
<evidence type="ECO:0000250" key="1"/>
<evidence type="ECO:0000250" key="2">
    <source>
        <dbReference type="UniProtKB" id="Q8C4V1"/>
    </source>
</evidence>
<evidence type="ECO:0000250" key="3">
    <source>
        <dbReference type="UniProtKB" id="Q8N264"/>
    </source>
</evidence>
<evidence type="ECO:0000255" key="4"/>
<evidence type="ECO:0000255" key="5">
    <source>
        <dbReference type="PROSITE-ProRule" id="PRU00145"/>
    </source>
</evidence>
<evidence type="ECO:0000255" key="6">
    <source>
        <dbReference type="PROSITE-ProRule" id="PRU00172"/>
    </source>
</evidence>
<evidence type="ECO:0000256" key="7">
    <source>
        <dbReference type="SAM" id="MobiDB-lite"/>
    </source>
</evidence>
<evidence type="ECO:0000269" key="8">
    <source>
    </source>
</evidence>
<evidence type="ECO:0000303" key="9">
    <source>
    </source>
</evidence>
<evidence type="ECO:0000303" key="10">
    <source>
    </source>
</evidence>
<evidence type="ECO:0000305" key="11"/>
<evidence type="ECO:0007744" key="12">
    <source>
    </source>
</evidence>
<comment type="function">
    <text evidence="1">Rho GTPase-activating protein involved in cell polarity, cell morphology and cytoskeletal organization. Acts as a GTPase activator for the Rac-type GTPase by converting it to an inactive GDP-bound state. Controls actin remodeling by inactivating Rac downstream of Rho leading to suppress leading edge protrusion and promotes cell retraction to achieve cellular polarity. Able to suppress RAC1 and CDC42 activity in vitro. Overexpression induces cell rounding with partial or complete disruption of actin stress fibers and formation of membrane ruffles, lamellipodia, and filopodia. Isoform 2 is a vascular cell-specific GAP involved in modulation of angiogenesis (By similarity).</text>
</comment>
<comment type="subunit">
    <text evidence="1">Interacts with FLNA.</text>
</comment>
<comment type="subcellular location">
    <subcellularLocation>
        <location evidence="1">Cytoplasm</location>
        <location evidence="1">Cytoskeleton</location>
    </subcellularLocation>
    <subcellularLocation>
        <location evidence="1">Cell junction</location>
        <location evidence="1">Adherens junction</location>
    </subcellularLocation>
    <subcellularLocation>
        <location evidence="1">Cell junction</location>
        <location evidence="1">Focal adhesion</location>
    </subcellularLocation>
    <subcellularLocation>
        <location evidence="1">Cell projection</location>
    </subcellularLocation>
    <text evidence="1">Localizes to actin stress fibers. In migrating cells, localizes to membrane lamellae and protusions (By similarity).</text>
</comment>
<comment type="alternative products">
    <event type="alternative splicing"/>
    <isoform>
        <id>Q5U2Z7-1</id>
        <name>1</name>
        <sequence type="displayed"/>
    </isoform>
    <isoform>
        <id>Q5U2Z7-2</id>
        <name>2</name>
        <sequence type="described" ref="VSP_023723 VSP_023724"/>
    </isoform>
    <isoform>
        <id>Q5U2Z7-3</id>
        <name>3</name>
        <sequence type="described" ref="VSP_023722"/>
    </isoform>
</comment>
<comment type="induction">
    <text evidence="8">Down-regulated after nephrectomy.</text>
</comment>
<comment type="domain">
    <text evidence="1">The coiled coil domain mediates the interaction with FLNA leading to its recruitment to lamellae.</text>
</comment>
<comment type="PTM">
    <text evidence="1">Phosphorylated by ROCK, leading to activate the RacGAP activity.</text>
</comment>
<name>RHG24_RAT</name>
<proteinExistence type="evidence at protein level"/>
<feature type="chain" id="PRO_0000280475" description="Rho GTPase-activating protein 24">
    <location>
        <begin position="1"/>
        <end position="748"/>
    </location>
</feature>
<feature type="domain" description="PH" evidence="5">
    <location>
        <begin position="18"/>
        <end position="124"/>
    </location>
</feature>
<feature type="domain" description="Rho-GAP" evidence="6">
    <location>
        <begin position="134"/>
        <end position="328"/>
    </location>
</feature>
<feature type="region of interest" description="Disordered" evidence="7">
    <location>
        <begin position="328"/>
        <end position="476"/>
    </location>
</feature>
<feature type="region of interest" description="Disordered" evidence="7">
    <location>
        <begin position="582"/>
        <end position="640"/>
    </location>
</feature>
<feature type="coiled-coil region" evidence="4">
    <location>
        <begin position="649"/>
        <end position="729"/>
    </location>
</feature>
<feature type="compositionally biased region" description="Polar residues" evidence="7">
    <location>
        <begin position="335"/>
        <end position="347"/>
    </location>
</feature>
<feature type="compositionally biased region" description="Polar residues" evidence="7">
    <location>
        <begin position="356"/>
        <end position="368"/>
    </location>
</feature>
<feature type="compositionally biased region" description="Basic and acidic residues" evidence="7">
    <location>
        <begin position="369"/>
        <end position="381"/>
    </location>
</feature>
<feature type="compositionally biased region" description="Polar residues" evidence="7">
    <location>
        <begin position="382"/>
        <end position="405"/>
    </location>
</feature>
<feature type="compositionally biased region" description="Polar residues" evidence="7">
    <location>
        <begin position="432"/>
        <end position="476"/>
    </location>
</feature>
<feature type="compositionally biased region" description="Basic and acidic residues" evidence="7">
    <location>
        <begin position="600"/>
        <end position="615"/>
    </location>
</feature>
<feature type="compositionally biased region" description="Low complexity" evidence="7">
    <location>
        <begin position="617"/>
        <end position="630"/>
    </location>
</feature>
<feature type="compositionally biased region" description="Polar residues" evidence="7">
    <location>
        <begin position="631"/>
        <end position="640"/>
    </location>
</feature>
<feature type="site" description="Arginine finger; crucial for GTP hydrolysis by stabilizing the transition state" evidence="6">
    <location>
        <position position="174"/>
    </location>
</feature>
<feature type="modified residue" description="Phosphoserine" evidence="12">
    <location>
        <position position="369"/>
    </location>
</feature>
<feature type="modified residue" description="Phosphoserine" evidence="12">
    <location>
        <position position="391"/>
    </location>
</feature>
<feature type="modified residue" description="Phosphoserine" evidence="2">
    <location>
        <position position="396"/>
    </location>
</feature>
<feature type="modified residue" description="Phosphoserine" evidence="12">
    <location>
        <position position="398"/>
    </location>
</feature>
<feature type="modified residue" description="Phosphoserine" evidence="3">
    <location>
        <position position="402"/>
    </location>
</feature>
<feature type="modified residue" description="Phosphoserine" evidence="3">
    <location>
        <position position="413"/>
    </location>
</feature>
<feature type="modified residue" description="Phosphoserine" evidence="12">
    <location>
        <position position="415"/>
    </location>
</feature>
<feature type="modified residue" description="Phosphoserine" evidence="3">
    <location>
        <position position="437"/>
    </location>
</feature>
<feature type="modified residue" description="Phosphothreonine" evidence="3">
    <location>
        <position position="452"/>
    </location>
</feature>
<feature type="modified residue" description="Phosphoserine" evidence="2">
    <location>
        <position position="495"/>
    </location>
</feature>
<feature type="splice variant" id="VSP_023722" description="In isoform 3." evidence="9">
    <location>
        <begin position="1"/>
        <end position="152"/>
    </location>
</feature>
<feature type="splice variant" id="VSP_023723" description="In isoform 2." evidence="10">
    <location>
        <begin position="1"/>
        <end position="91"/>
    </location>
</feature>
<feature type="splice variant" id="VSP_023724" description="In isoform 2." evidence="10">
    <original>RDRMTANHESYLLMASTQNDMEDWVKSIRRVIWGPFGG</original>
    <variation>MPEDRNSGGRPSGALASTPFIPKTTYRRIKRCFSFRK</variation>
    <location>
        <begin position="92"/>
        <end position="129"/>
    </location>
</feature>
<feature type="sequence conflict" description="In Ref. 1; BAD23895." evidence="11" ref="1">
    <original>M</original>
    <variation>I</variation>
    <location>
        <position position="355"/>
    </location>
</feature>
<feature type="sequence conflict" description="In Ref. 1; BAD23895." evidence="11" ref="1">
    <original>S</original>
    <variation>R</variation>
    <location>
        <position position="430"/>
    </location>
</feature>
<feature type="sequence conflict" description="In Ref. 1; BAD23895." evidence="11" ref="1">
    <original>A</original>
    <variation>G</variation>
    <location>
        <position position="443"/>
    </location>
</feature>
<feature type="sequence conflict" description="In Ref. 1; BAD23895." evidence="11" ref="1">
    <original>T</original>
    <variation>S</variation>
    <location>
        <position position="462"/>
    </location>
</feature>
<feature type="sequence conflict" description="In Ref. 1; BAD23895." evidence="11" ref="1">
    <original>K</original>
    <variation>E</variation>
    <location>
        <position position="466"/>
    </location>
</feature>
<feature type="sequence conflict" description="In Ref. 1; BAD23895." evidence="11" ref="1">
    <original>M</original>
    <variation>W</variation>
    <location>
        <position position="472"/>
    </location>
</feature>
<feature type="sequence conflict" description="In Ref. 1; BAD23895." evidence="11" ref="1">
    <original>I</original>
    <variation>Y</variation>
    <location>
        <position position="486"/>
    </location>
</feature>
<feature type="sequence conflict" description="In Ref. 1; BAD23895." evidence="11" ref="1">
    <original>A</original>
    <variation>G</variation>
    <location>
        <position position="520"/>
    </location>
</feature>
<feature type="sequence conflict" description="In Ref. 1; BAD23895." evidence="11" ref="1">
    <original>G</original>
    <variation>S</variation>
    <location>
        <position position="524"/>
    </location>
</feature>
<feature type="sequence conflict" description="In Ref. 1; BAD23895." evidence="11" ref="1">
    <original>S</original>
    <variation>R</variation>
    <location>
        <position position="549"/>
    </location>
</feature>
<feature type="sequence conflict" description="In Ref. 1; BAD23895." evidence="11" ref="1">
    <original>E</original>
    <variation>D</variation>
    <location>
        <position position="631"/>
    </location>
</feature>
<feature type="sequence conflict" description="In Ref. 1; BAD23895." evidence="11" ref="1">
    <original>V</original>
    <variation>F</variation>
    <location>
        <position position="634"/>
    </location>
</feature>
<keyword id="KW-0025">Alternative splicing</keyword>
<keyword id="KW-0037">Angiogenesis</keyword>
<keyword id="KW-0965">Cell junction</keyword>
<keyword id="KW-0966">Cell projection</keyword>
<keyword id="KW-0175">Coiled coil</keyword>
<keyword id="KW-0963">Cytoplasm</keyword>
<keyword id="KW-0206">Cytoskeleton</keyword>
<keyword id="KW-0217">Developmental protein</keyword>
<keyword id="KW-0221">Differentiation</keyword>
<keyword id="KW-0343">GTPase activation</keyword>
<keyword id="KW-0597">Phosphoprotein</keyword>
<keyword id="KW-1185">Reference proteome</keyword>
<organism>
    <name type="scientific">Rattus norvegicus</name>
    <name type="common">Rat</name>
    <dbReference type="NCBI Taxonomy" id="10116"/>
    <lineage>
        <taxon>Eukaryota</taxon>
        <taxon>Metazoa</taxon>
        <taxon>Chordata</taxon>
        <taxon>Craniata</taxon>
        <taxon>Vertebrata</taxon>
        <taxon>Euteleostomi</taxon>
        <taxon>Mammalia</taxon>
        <taxon>Eutheria</taxon>
        <taxon>Euarchontoglires</taxon>
        <taxon>Glires</taxon>
        <taxon>Rodentia</taxon>
        <taxon>Myomorpha</taxon>
        <taxon>Muroidea</taxon>
        <taxon>Muridae</taxon>
        <taxon>Murinae</taxon>
        <taxon>Rattus</taxon>
    </lineage>
</organism>
<gene>
    <name type="primary">Arhgap24</name>
    <name type="ORF">DR-NR#2</name>
</gene>
<protein>
    <recommendedName>
        <fullName>Rho GTPase-activating protein 24</fullName>
    </recommendedName>
    <alternativeName>
        <fullName>Down-regulated in nephrectomized rat kidney #2</fullName>
    </alternativeName>
    <alternativeName>
        <fullName>Rho-type GTPase-activating protein 24</fullName>
    </alternativeName>
</protein>
<reference key="1">
    <citation type="journal article" date="2004" name="Kidney Int.">
        <title>Gene expression variance based on random sequencing in rat remnant kidney.</title>
        <authorList>
            <person name="Horiba N."/>
            <person name="Masuda S."/>
            <person name="Takeuchi A."/>
            <person name="Saito H."/>
            <person name="Okuda M."/>
            <person name="Inui K."/>
        </authorList>
    </citation>
    <scope>NUCLEOTIDE SEQUENCE [LARGE SCALE MRNA] (ISOFORM 3)</scope>
    <scope>INDUCTION</scope>
    <source>
        <strain>Wistar</strain>
        <tissue>Kidney</tissue>
    </source>
</reference>
<reference key="2">
    <citation type="journal article" date="2004" name="Genome Res.">
        <title>The status, quality, and expansion of the NIH full-length cDNA project: the Mammalian Gene Collection (MGC).</title>
        <authorList>
            <consortium name="The MGC Project Team"/>
        </authorList>
    </citation>
    <scope>NUCLEOTIDE SEQUENCE [LARGE SCALE MRNA] (ISOFORM 2)</scope>
    <source>
        <tissue>Kidney</tissue>
    </source>
</reference>
<reference key="3">
    <citation type="submission" date="2003-04" db="EMBL/GenBank/DDBJ databases">
        <title>Amgen rat EST program.</title>
        <authorList>
            <consortium name="Amgen EST program"/>
        </authorList>
    </citation>
    <scope>NUCLEOTIDE SEQUENCE [LARGE SCALE MRNA] OF 1-159 (ISOFORM 1)</scope>
</reference>
<reference key="4">
    <citation type="journal article" date="2012" name="Nat. Commun.">
        <title>Quantitative maps of protein phosphorylation sites across 14 different rat organs and tissues.</title>
        <authorList>
            <person name="Lundby A."/>
            <person name="Secher A."/>
            <person name="Lage K."/>
            <person name="Nordsborg N.B."/>
            <person name="Dmytriyev A."/>
            <person name="Lundby C."/>
            <person name="Olsen J.V."/>
        </authorList>
    </citation>
    <scope>PHOSPHORYLATION [LARGE SCALE ANALYSIS] AT SER-369; SER-391; SER-398 AND SER-415</scope>
    <scope>IDENTIFICATION BY MASS SPECTROMETRY [LARGE SCALE ANALYSIS]</scope>
</reference>
<dbReference type="EMBL" id="AB108670">
    <property type="protein sequence ID" value="BAD23895.1"/>
    <property type="molecule type" value="mRNA"/>
</dbReference>
<dbReference type="EMBL" id="BC085797">
    <property type="protein sequence ID" value="AAH85797.1"/>
    <property type="molecule type" value="mRNA"/>
</dbReference>
<dbReference type="EMBL" id="CB609913">
    <property type="status" value="NOT_ANNOTATED_CDS"/>
    <property type="molecule type" value="mRNA"/>
</dbReference>
<dbReference type="RefSeq" id="NP_001012032.1">
    <property type="nucleotide sequence ID" value="NM_001012032.1"/>
</dbReference>
<dbReference type="RefSeq" id="NP_001380749.1">
    <molecule id="Q5U2Z7-1"/>
    <property type="nucleotide sequence ID" value="NM_001393820.1"/>
</dbReference>
<dbReference type="SMR" id="Q5U2Z7"/>
<dbReference type="FunCoup" id="Q5U2Z7">
    <property type="interactions" value="497"/>
</dbReference>
<dbReference type="STRING" id="10116.ENSRNOP00000075613"/>
<dbReference type="iPTMnet" id="Q5U2Z7"/>
<dbReference type="PhosphoSitePlus" id="Q5U2Z7"/>
<dbReference type="PaxDb" id="10116-ENSRNOP00000002857"/>
<dbReference type="Ensembl" id="ENSRNOT00000080758.3">
    <molecule id="Q5U2Z7-1"/>
    <property type="protein sequence ID" value="ENSRNOP00000072212.2"/>
    <property type="gene ID" value="ENSRNOG00000056944.3"/>
</dbReference>
<dbReference type="GeneID" id="305156"/>
<dbReference type="KEGG" id="rno:305156"/>
<dbReference type="AGR" id="RGD:1306669"/>
<dbReference type="CTD" id="83478"/>
<dbReference type="RGD" id="1306669">
    <property type="gene designation" value="Arhgap24"/>
</dbReference>
<dbReference type="eggNOG" id="KOG4270">
    <property type="taxonomic scope" value="Eukaryota"/>
</dbReference>
<dbReference type="GeneTree" id="ENSGT00950000183015"/>
<dbReference type="InParanoid" id="Q5U2Z7"/>
<dbReference type="OMA" id="QNAMKCG"/>
<dbReference type="PhylomeDB" id="Q5U2Z7"/>
<dbReference type="TreeFam" id="TF323577"/>
<dbReference type="Reactome" id="R-RNO-8980692">
    <property type="pathway name" value="RHOA GTPase cycle"/>
</dbReference>
<dbReference type="Reactome" id="R-RNO-9013148">
    <property type="pathway name" value="CDC42 GTPase cycle"/>
</dbReference>
<dbReference type="Reactome" id="R-RNO-9013149">
    <property type="pathway name" value="RAC1 GTPase cycle"/>
</dbReference>
<dbReference type="PRO" id="PR:Q5U2Z7"/>
<dbReference type="Proteomes" id="UP000002494">
    <property type="component" value="Chromosome 14"/>
</dbReference>
<dbReference type="GO" id="GO:0005912">
    <property type="term" value="C:adherens junction"/>
    <property type="evidence" value="ECO:0007669"/>
    <property type="project" value="UniProtKB-SubCell"/>
</dbReference>
<dbReference type="GO" id="GO:0042995">
    <property type="term" value="C:cell projection"/>
    <property type="evidence" value="ECO:0007669"/>
    <property type="project" value="UniProtKB-SubCell"/>
</dbReference>
<dbReference type="GO" id="GO:0005737">
    <property type="term" value="C:cytoplasm"/>
    <property type="evidence" value="ECO:0007669"/>
    <property type="project" value="UniProtKB-KW"/>
</dbReference>
<dbReference type="GO" id="GO:0005856">
    <property type="term" value="C:cytoskeleton"/>
    <property type="evidence" value="ECO:0007669"/>
    <property type="project" value="UniProtKB-SubCell"/>
</dbReference>
<dbReference type="GO" id="GO:0005925">
    <property type="term" value="C:focal adhesion"/>
    <property type="evidence" value="ECO:0000266"/>
    <property type="project" value="RGD"/>
</dbReference>
<dbReference type="GO" id="GO:0005096">
    <property type="term" value="F:GTPase activator activity"/>
    <property type="evidence" value="ECO:0000266"/>
    <property type="project" value="RGD"/>
</dbReference>
<dbReference type="GO" id="GO:0001525">
    <property type="term" value="P:angiogenesis"/>
    <property type="evidence" value="ECO:0007669"/>
    <property type="project" value="UniProtKB-KW"/>
</dbReference>
<dbReference type="GO" id="GO:0030154">
    <property type="term" value="P:cell differentiation"/>
    <property type="evidence" value="ECO:0007669"/>
    <property type="project" value="UniProtKB-KW"/>
</dbReference>
<dbReference type="GO" id="GO:0035021">
    <property type="term" value="P:negative regulation of Rac protein signal transduction"/>
    <property type="evidence" value="ECO:0000266"/>
    <property type="project" value="RGD"/>
</dbReference>
<dbReference type="GO" id="GO:1900028">
    <property type="term" value="P:negative regulation of ruffle assembly"/>
    <property type="evidence" value="ECO:0000266"/>
    <property type="project" value="RGD"/>
</dbReference>
<dbReference type="GO" id="GO:0016601">
    <property type="term" value="P:Rac protein signal transduction"/>
    <property type="evidence" value="ECO:0000266"/>
    <property type="project" value="RGD"/>
</dbReference>
<dbReference type="GO" id="GO:0035313">
    <property type="term" value="P:wound healing, spreading of epidermal cells"/>
    <property type="evidence" value="ECO:0000266"/>
    <property type="project" value="RGD"/>
</dbReference>
<dbReference type="CDD" id="cd13379">
    <property type="entry name" value="PH_RhoGap24"/>
    <property type="match status" value="1"/>
</dbReference>
<dbReference type="CDD" id="cd04390">
    <property type="entry name" value="RhoGAP_ARHGAP22_24_25"/>
    <property type="match status" value="1"/>
</dbReference>
<dbReference type="FunFam" id="2.30.29.30:FF:000286">
    <property type="entry name" value="PH-protein kinase domain containing protein"/>
    <property type="match status" value="1"/>
</dbReference>
<dbReference type="FunFam" id="1.10.555.10:FF:000015">
    <property type="entry name" value="rho GTPase-activating protein 25 isoform X1"/>
    <property type="match status" value="1"/>
</dbReference>
<dbReference type="Gene3D" id="2.30.29.30">
    <property type="entry name" value="Pleckstrin-homology domain (PH domain)/Phosphotyrosine-binding domain (PTB)"/>
    <property type="match status" value="1"/>
</dbReference>
<dbReference type="Gene3D" id="1.10.555.10">
    <property type="entry name" value="Rho GTPase activation protein"/>
    <property type="match status" value="1"/>
</dbReference>
<dbReference type="InterPro" id="IPR011993">
    <property type="entry name" value="PH-like_dom_sf"/>
</dbReference>
<dbReference type="InterPro" id="IPR001849">
    <property type="entry name" value="PH_domain"/>
</dbReference>
<dbReference type="InterPro" id="IPR008936">
    <property type="entry name" value="Rho_GTPase_activation_prot"/>
</dbReference>
<dbReference type="InterPro" id="IPR051025">
    <property type="entry name" value="RhoGAP"/>
</dbReference>
<dbReference type="InterPro" id="IPR000198">
    <property type="entry name" value="RhoGAP_dom"/>
</dbReference>
<dbReference type="PANTHER" id="PTHR15228:SF19">
    <property type="entry name" value="RHO GTPASE-ACTIVATING PROTEIN 24"/>
    <property type="match status" value="1"/>
</dbReference>
<dbReference type="PANTHER" id="PTHR15228">
    <property type="entry name" value="SPERMATHECAL PHYSIOLOGY VARIANT"/>
    <property type="match status" value="1"/>
</dbReference>
<dbReference type="Pfam" id="PF00169">
    <property type="entry name" value="PH"/>
    <property type="match status" value="1"/>
</dbReference>
<dbReference type="Pfam" id="PF00620">
    <property type="entry name" value="RhoGAP"/>
    <property type="match status" value="1"/>
</dbReference>
<dbReference type="SMART" id="SM00233">
    <property type="entry name" value="PH"/>
    <property type="match status" value="1"/>
</dbReference>
<dbReference type="SMART" id="SM00324">
    <property type="entry name" value="RhoGAP"/>
    <property type="match status" value="1"/>
</dbReference>
<dbReference type="SUPFAM" id="SSF48350">
    <property type="entry name" value="GTPase activation domain, GAP"/>
    <property type="match status" value="1"/>
</dbReference>
<dbReference type="SUPFAM" id="SSF50729">
    <property type="entry name" value="PH domain-like"/>
    <property type="match status" value="1"/>
</dbReference>
<dbReference type="PROSITE" id="PS50003">
    <property type="entry name" value="PH_DOMAIN"/>
    <property type="match status" value="1"/>
</dbReference>
<dbReference type="PROSITE" id="PS50238">
    <property type="entry name" value="RHOGAP"/>
    <property type="match status" value="1"/>
</dbReference>
<sequence length="748" mass="84144">MEENCDSTENPHSQGRQNATKCGWLRKQGGFVKTWHTRWFVLKGDQLHYFKDEDETKPLGTIFLPGNKVIEHPCNEESPGKFLFEVVPGGERDRMTANHESYLLMASTQNDMEDWVKSIRRVIWGPFGGGIFGQKLEDTVRYEKRYGNRLAPMLVEQCVDFIRQRGLKEEGLFRLPGQANLVKELQDAFDCGEKPSFDSNTDVHTVASLLKLYLRELPEPVVPYAKYEDFLSCATLLSKEEEAGVKELTKQVKSLPVVNYNLLKYICRFLDEVQSYSGVNKMSAQNLATVFGPNILRPKVEDPLTIMEGTVVVQQLMSVMISKHDRLFPKDTEPQSKPQEGPNSNNNDGHKKVTMGQLQNKENNNTKESPVRRCSWDKPESPQRSSMDNGSPTALSGSKTNSPRNSIHKLDVSRSPPLTVKKNPAFNKGSGIVTNGSFSSSNAEGVEKTQTTPNGSLQARRTSSLKSSGTKMGTHSVQNGTVRMGILNTDTLGNSLNGRSMSWLPNGYVTLRDNKQKEPAGESGQHNRLSTYDNVHQQFSLMNLDDKHSVDSATWSTSSCEISLPENSNSCRSSTTTCPEQDFYGGNFEDPVLDGPPQDDLSHPGDYENKSDRRSVGGRSSRATSSSDNSETFVGNTSSNHSALHSLVSSLKQEMTKQKIEYESRIKSLEQRNLTLETEMLNLHDELDQERKKFTMIEIKMRNAERAKEDAEKRNDMLQKEMEQFFSTFGDLTVEPRRSERGNTIWIQ</sequence>